<protein>
    <recommendedName>
        <fullName evidence="1">Lysine--tRNA ligase</fullName>
        <ecNumber evidence="1">6.1.1.6</ecNumber>
    </recommendedName>
    <alternativeName>
        <fullName evidence="1">Lysyl-tRNA synthetase</fullName>
        <shortName evidence="1">LysRS</shortName>
    </alternativeName>
</protein>
<gene>
    <name evidence="1" type="primary">lysS</name>
    <name type="ordered locus">BPP2045</name>
</gene>
<accession>Q7W8T6</accession>
<sequence length="506" mass="56673">MTDQSPAPTAQDENRLIAERRAKLARLRETGVAFPNDFVPDAHAADLHARYDGLDQEALTAAAVTVKVAGRMMLKRVMGKASFATLQDGSGRIQIYLERGTLGEEAYAAFKQWDIGDIIAIEGPVFKTNKGELSVHANSARLLSKSLRPLPDKFHGVADQELRYRQRYVDLIMTDATRRTFEARSKAVGGIRQAMLNAGFFEVETPMLHPIPGGAAAKPFVTHHNALDMQMFLRIAPELYLKRLIVGGFERVFEINRNFRNEGVSPRHNPEFTMMEFYAAYADYRWLMDFTEDLIRQAAIAATGSAVLSYQDRELDLSQPFDHLTICEAILKYAEGYTQAQLDDPAFVRAELRKLGANVEGPPLARAGLGALQLALFEETAEARLWRPTYIIDYPVEVSPLARASDTRDGITERFELFITGREIANGFSELNDPEDQAERFRAQVEAKDAGDEEAMYFDADYIRALEYGMPPTGGCGIGIDRLVMLLTDSPSIRDVILFPHLRRED</sequence>
<feature type="chain" id="PRO_0000152603" description="Lysine--tRNA ligase">
    <location>
        <begin position="1"/>
        <end position="506"/>
    </location>
</feature>
<feature type="binding site" evidence="1">
    <location>
        <position position="416"/>
    </location>
    <ligand>
        <name>Mg(2+)</name>
        <dbReference type="ChEBI" id="CHEBI:18420"/>
        <label>1</label>
    </ligand>
</feature>
<feature type="binding site" evidence="1">
    <location>
        <position position="423"/>
    </location>
    <ligand>
        <name>Mg(2+)</name>
        <dbReference type="ChEBI" id="CHEBI:18420"/>
        <label>1</label>
    </ligand>
</feature>
<feature type="binding site" evidence="1">
    <location>
        <position position="423"/>
    </location>
    <ligand>
        <name>Mg(2+)</name>
        <dbReference type="ChEBI" id="CHEBI:18420"/>
        <label>2</label>
    </ligand>
</feature>
<evidence type="ECO:0000255" key="1">
    <source>
        <dbReference type="HAMAP-Rule" id="MF_00252"/>
    </source>
</evidence>
<dbReference type="EC" id="6.1.1.6" evidence="1"/>
<dbReference type="EMBL" id="BX640429">
    <property type="protein sequence ID" value="CAE37345.1"/>
    <property type="molecule type" value="Genomic_DNA"/>
</dbReference>
<dbReference type="RefSeq" id="WP_010928335.1">
    <property type="nucleotide sequence ID" value="NC_002928.3"/>
</dbReference>
<dbReference type="SMR" id="Q7W8T6"/>
<dbReference type="GeneID" id="93203819"/>
<dbReference type="KEGG" id="bpa:BPP2045"/>
<dbReference type="HOGENOM" id="CLU_008255_6_0_4"/>
<dbReference type="Proteomes" id="UP000001421">
    <property type="component" value="Chromosome"/>
</dbReference>
<dbReference type="GO" id="GO:0005829">
    <property type="term" value="C:cytosol"/>
    <property type="evidence" value="ECO:0007669"/>
    <property type="project" value="TreeGrafter"/>
</dbReference>
<dbReference type="GO" id="GO:0005524">
    <property type="term" value="F:ATP binding"/>
    <property type="evidence" value="ECO:0007669"/>
    <property type="project" value="UniProtKB-UniRule"/>
</dbReference>
<dbReference type="GO" id="GO:0004824">
    <property type="term" value="F:lysine-tRNA ligase activity"/>
    <property type="evidence" value="ECO:0007669"/>
    <property type="project" value="UniProtKB-UniRule"/>
</dbReference>
<dbReference type="GO" id="GO:0000287">
    <property type="term" value="F:magnesium ion binding"/>
    <property type="evidence" value="ECO:0007669"/>
    <property type="project" value="UniProtKB-UniRule"/>
</dbReference>
<dbReference type="GO" id="GO:0000049">
    <property type="term" value="F:tRNA binding"/>
    <property type="evidence" value="ECO:0007669"/>
    <property type="project" value="TreeGrafter"/>
</dbReference>
<dbReference type="GO" id="GO:0006430">
    <property type="term" value="P:lysyl-tRNA aminoacylation"/>
    <property type="evidence" value="ECO:0007669"/>
    <property type="project" value="UniProtKB-UniRule"/>
</dbReference>
<dbReference type="CDD" id="cd00775">
    <property type="entry name" value="LysRS_core"/>
    <property type="match status" value="1"/>
</dbReference>
<dbReference type="CDD" id="cd04322">
    <property type="entry name" value="LysRS_N"/>
    <property type="match status" value="1"/>
</dbReference>
<dbReference type="FunFam" id="2.40.50.140:FF:000024">
    <property type="entry name" value="Lysine--tRNA ligase"/>
    <property type="match status" value="1"/>
</dbReference>
<dbReference type="FunFam" id="3.30.930.10:FF:000001">
    <property type="entry name" value="Lysine--tRNA ligase"/>
    <property type="match status" value="1"/>
</dbReference>
<dbReference type="Gene3D" id="3.30.930.10">
    <property type="entry name" value="Bira Bifunctional Protein, Domain 2"/>
    <property type="match status" value="1"/>
</dbReference>
<dbReference type="Gene3D" id="2.40.50.140">
    <property type="entry name" value="Nucleic acid-binding proteins"/>
    <property type="match status" value="1"/>
</dbReference>
<dbReference type="HAMAP" id="MF_00252">
    <property type="entry name" value="Lys_tRNA_synth_class2"/>
    <property type="match status" value="1"/>
</dbReference>
<dbReference type="InterPro" id="IPR004364">
    <property type="entry name" value="Aa-tRNA-synt_II"/>
</dbReference>
<dbReference type="InterPro" id="IPR006195">
    <property type="entry name" value="aa-tRNA-synth_II"/>
</dbReference>
<dbReference type="InterPro" id="IPR045864">
    <property type="entry name" value="aa-tRNA-synth_II/BPL/LPL"/>
</dbReference>
<dbReference type="InterPro" id="IPR002313">
    <property type="entry name" value="Lys-tRNA-ligase_II"/>
</dbReference>
<dbReference type="InterPro" id="IPR044136">
    <property type="entry name" value="Lys-tRNA-ligase_II_N"/>
</dbReference>
<dbReference type="InterPro" id="IPR018149">
    <property type="entry name" value="Lys-tRNA-synth_II_C"/>
</dbReference>
<dbReference type="InterPro" id="IPR012340">
    <property type="entry name" value="NA-bd_OB-fold"/>
</dbReference>
<dbReference type="InterPro" id="IPR004365">
    <property type="entry name" value="NA-bd_OB_tRNA"/>
</dbReference>
<dbReference type="NCBIfam" id="TIGR00499">
    <property type="entry name" value="lysS_bact"/>
    <property type="match status" value="1"/>
</dbReference>
<dbReference type="NCBIfam" id="NF001756">
    <property type="entry name" value="PRK00484.1"/>
    <property type="match status" value="1"/>
</dbReference>
<dbReference type="PANTHER" id="PTHR42918:SF15">
    <property type="entry name" value="LYSINE--TRNA LIGASE, CHLOROPLASTIC_MITOCHONDRIAL"/>
    <property type="match status" value="1"/>
</dbReference>
<dbReference type="PANTHER" id="PTHR42918">
    <property type="entry name" value="LYSYL-TRNA SYNTHETASE"/>
    <property type="match status" value="1"/>
</dbReference>
<dbReference type="Pfam" id="PF00152">
    <property type="entry name" value="tRNA-synt_2"/>
    <property type="match status" value="1"/>
</dbReference>
<dbReference type="Pfam" id="PF01336">
    <property type="entry name" value="tRNA_anti-codon"/>
    <property type="match status" value="1"/>
</dbReference>
<dbReference type="PRINTS" id="PR00982">
    <property type="entry name" value="TRNASYNTHLYS"/>
</dbReference>
<dbReference type="SUPFAM" id="SSF55681">
    <property type="entry name" value="Class II aaRS and biotin synthetases"/>
    <property type="match status" value="1"/>
</dbReference>
<dbReference type="SUPFAM" id="SSF50249">
    <property type="entry name" value="Nucleic acid-binding proteins"/>
    <property type="match status" value="1"/>
</dbReference>
<dbReference type="PROSITE" id="PS50862">
    <property type="entry name" value="AA_TRNA_LIGASE_II"/>
    <property type="match status" value="1"/>
</dbReference>
<organism>
    <name type="scientific">Bordetella parapertussis (strain 12822 / ATCC BAA-587 / NCTC 13253)</name>
    <dbReference type="NCBI Taxonomy" id="257311"/>
    <lineage>
        <taxon>Bacteria</taxon>
        <taxon>Pseudomonadati</taxon>
        <taxon>Pseudomonadota</taxon>
        <taxon>Betaproteobacteria</taxon>
        <taxon>Burkholderiales</taxon>
        <taxon>Alcaligenaceae</taxon>
        <taxon>Bordetella</taxon>
    </lineage>
</organism>
<comment type="catalytic activity">
    <reaction evidence="1">
        <text>tRNA(Lys) + L-lysine + ATP = L-lysyl-tRNA(Lys) + AMP + diphosphate</text>
        <dbReference type="Rhea" id="RHEA:20792"/>
        <dbReference type="Rhea" id="RHEA-COMP:9696"/>
        <dbReference type="Rhea" id="RHEA-COMP:9697"/>
        <dbReference type="ChEBI" id="CHEBI:30616"/>
        <dbReference type="ChEBI" id="CHEBI:32551"/>
        <dbReference type="ChEBI" id="CHEBI:33019"/>
        <dbReference type="ChEBI" id="CHEBI:78442"/>
        <dbReference type="ChEBI" id="CHEBI:78529"/>
        <dbReference type="ChEBI" id="CHEBI:456215"/>
        <dbReference type="EC" id="6.1.1.6"/>
    </reaction>
</comment>
<comment type="cofactor">
    <cofactor evidence="1">
        <name>Mg(2+)</name>
        <dbReference type="ChEBI" id="CHEBI:18420"/>
    </cofactor>
    <text evidence="1">Binds 3 Mg(2+) ions per subunit.</text>
</comment>
<comment type="subunit">
    <text evidence="1">Homodimer.</text>
</comment>
<comment type="subcellular location">
    <subcellularLocation>
        <location evidence="1">Cytoplasm</location>
    </subcellularLocation>
</comment>
<comment type="similarity">
    <text evidence="1">Belongs to the class-II aminoacyl-tRNA synthetase family.</text>
</comment>
<name>SYK_BORPA</name>
<keyword id="KW-0030">Aminoacyl-tRNA synthetase</keyword>
<keyword id="KW-0067">ATP-binding</keyword>
<keyword id="KW-0963">Cytoplasm</keyword>
<keyword id="KW-0436">Ligase</keyword>
<keyword id="KW-0460">Magnesium</keyword>
<keyword id="KW-0479">Metal-binding</keyword>
<keyword id="KW-0547">Nucleotide-binding</keyword>
<keyword id="KW-0648">Protein biosynthesis</keyword>
<reference key="1">
    <citation type="journal article" date="2003" name="Nat. Genet.">
        <title>Comparative analysis of the genome sequences of Bordetella pertussis, Bordetella parapertussis and Bordetella bronchiseptica.</title>
        <authorList>
            <person name="Parkhill J."/>
            <person name="Sebaihia M."/>
            <person name="Preston A."/>
            <person name="Murphy L.D."/>
            <person name="Thomson N.R."/>
            <person name="Harris D.E."/>
            <person name="Holden M.T.G."/>
            <person name="Churcher C.M."/>
            <person name="Bentley S.D."/>
            <person name="Mungall K.L."/>
            <person name="Cerdeno-Tarraga A.-M."/>
            <person name="Temple L."/>
            <person name="James K.D."/>
            <person name="Harris B."/>
            <person name="Quail M.A."/>
            <person name="Achtman M."/>
            <person name="Atkin R."/>
            <person name="Baker S."/>
            <person name="Basham D."/>
            <person name="Bason N."/>
            <person name="Cherevach I."/>
            <person name="Chillingworth T."/>
            <person name="Collins M."/>
            <person name="Cronin A."/>
            <person name="Davis P."/>
            <person name="Doggett J."/>
            <person name="Feltwell T."/>
            <person name="Goble A."/>
            <person name="Hamlin N."/>
            <person name="Hauser H."/>
            <person name="Holroyd S."/>
            <person name="Jagels K."/>
            <person name="Leather S."/>
            <person name="Moule S."/>
            <person name="Norberczak H."/>
            <person name="O'Neil S."/>
            <person name="Ormond D."/>
            <person name="Price C."/>
            <person name="Rabbinowitsch E."/>
            <person name="Rutter S."/>
            <person name="Sanders M."/>
            <person name="Saunders D."/>
            <person name="Seeger K."/>
            <person name="Sharp S."/>
            <person name="Simmonds M."/>
            <person name="Skelton J."/>
            <person name="Squares R."/>
            <person name="Squares S."/>
            <person name="Stevens K."/>
            <person name="Unwin L."/>
            <person name="Whitehead S."/>
            <person name="Barrell B.G."/>
            <person name="Maskell D.J."/>
        </authorList>
    </citation>
    <scope>NUCLEOTIDE SEQUENCE [LARGE SCALE GENOMIC DNA]</scope>
    <source>
        <strain>12822 / ATCC BAA-587 / NCTC 13253</strain>
    </source>
</reference>
<proteinExistence type="inferred from homology"/>